<reference key="1">
    <citation type="journal article" date="2003" name="Lancet">
        <title>Genome sequence of Vibrio parahaemolyticus: a pathogenic mechanism distinct from that of V. cholerae.</title>
        <authorList>
            <person name="Makino K."/>
            <person name="Oshima K."/>
            <person name="Kurokawa K."/>
            <person name="Yokoyama K."/>
            <person name="Uda T."/>
            <person name="Tagomori K."/>
            <person name="Iijima Y."/>
            <person name="Najima M."/>
            <person name="Nakano M."/>
            <person name="Yamashita A."/>
            <person name="Kubota Y."/>
            <person name="Kimura S."/>
            <person name="Yasunaga T."/>
            <person name="Honda T."/>
            <person name="Shinagawa H."/>
            <person name="Hattori M."/>
            <person name="Iida T."/>
        </authorList>
    </citation>
    <scope>NUCLEOTIDE SEQUENCE [LARGE SCALE GENOMIC DNA]</scope>
    <source>
        <strain>RIMD 2210633</strain>
    </source>
</reference>
<keyword id="KW-0143">Chaperone</keyword>
<keyword id="KW-0963">Cytoplasm</keyword>
<sequence>MKIRPLNDKLIVERQEVENKSEGGIVLTSQSVKKSNRGKVIAVGLGKRFENGERAAMEVKVGDQIIFNDGYGVKTEKIDGAEYLILSESDVLAIVE</sequence>
<comment type="function">
    <text evidence="1">Together with the chaperonin GroEL, plays an essential role in assisting protein folding. The GroEL-GroES system forms a nano-cage that allows encapsulation of the non-native substrate proteins and provides a physical environment optimized to promote and accelerate protein folding. GroES binds to the apical surface of the GroEL ring, thereby capping the opening of the GroEL channel.</text>
</comment>
<comment type="subunit">
    <text evidence="1">Heptamer of 7 subunits arranged in a ring. Interacts with the chaperonin GroEL.</text>
</comment>
<comment type="subcellular location">
    <subcellularLocation>
        <location evidence="1">Cytoplasm</location>
    </subcellularLocation>
</comment>
<comment type="similarity">
    <text evidence="1 2">Belongs to the GroES chaperonin family.</text>
</comment>
<name>CH102_VIBPA</name>
<feature type="chain" id="PRO_0000174895" description="Co-chaperonin GroES 2">
    <location>
        <begin position="1"/>
        <end position="96"/>
    </location>
</feature>
<dbReference type="EMBL" id="BA000032">
    <property type="protein sequence ID" value="BAC61629.1"/>
    <property type="molecule type" value="Genomic_DNA"/>
</dbReference>
<dbReference type="RefSeq" id="NP_799796.1">
    <property type="nucleotide sequence ID" value="NC_004605.1"/>
</dbReference>
<dbReference type="RefSeq" id="WP_005481493.1">
    <property type="nucleotide sequence ID" value="NC_004605.1"/>
</dbReference>
<dbReference type="SMR" id="Q87JG7"/>
<dbReference type="GeneID" id="1190974"/>
<dbReference type="KEGG" id="vpa:VPA0286"/>
<dbReference type="PATRIC" id="fig|223926.6.peg.3238"/>
<dbReference type="eggNOG" id="COG0234">
    <property type="taxonomic scope" value="Bacteria"/>
</dbReference>
<dbReference type="HOGENOM" id="CLU_132825_1_1_6"/>
<dbReference type="Proteomes" id="UP000002493">
    <property type="component" value="Chromosome 2"/>
</dbReference>
<dbReference type="GO" id="GO:0005737">
    <property type="term" value="C:cytoplasm"/>
    <property type="evidence" value="ECO:0007669"/>
    <property type="project" value="UniProtKB-SubCell"/>
</dbReference>
<dbReference type="GO" id="GO:0005524">
    <property type="term" value="F:ATP binding"/>
    <property type="evidence" value="ECO:0007669"/>
    <property type="project" value="InterPro"/>
</dbReference>
<dbReference type="GO" id="GO:0046872">
    <property type="term" value="F:metal ion binding"/>
    <property type="evidence" value="ECO:0007669"/>
    <property type="project" value="TreeGrafter"/>
</dbReference>
<dbReference type="GO" id="GO:0044183">
    <property type="term" value="F:protein folding chaperone"/>
    <property type="evidence" value="ECO:0007669"/>
    <property type="project" value="InterPro"/>
</dbReference>
<dbReference type="GO" id="GO:0051087">
    <property type="term" value="F:protein-folding chaperone binding"/>
    <property type="evidence" value="ECO:0007669"/>
    <property type="project" value="TreeGrafter"/>
</dbReference>
<dbReference type="GO" id="GO:0051082">
    <property type="term" value="F:unfolded protein binding"/>
    <property type="evidence" value="ECO:0007669"/>
    <property type="project" value="TreeGrafter"/>
</dbReference>
<dbReference type="GO" id="GO:0051085">
    <property type="term" value="P:chaperone cofactor-dependent protein refolding"/>
    <property type="evidence" value="ECO:0007669"/>
    <property type="project" value="TreeGrafter"/>
</dbReference>
<dbReference type="CDD" id="cd00320">
    <property type="entry name" value="cpn10"/>
    <property type="match status" value="1"/>
</dbReference>
<dbReference type="FunFam" id="2.30.33.40:FF:000001">
    <property type="entry name" value="10 kDa chaperonin"/>
    <property type="match status" value="1"/>
</dbReference>
<dbReference type="Gene3D" id="2.30.33.40">
    <property type="entry name" value="GroES chaperonin"/>
    <property type="match status" value="1"/>
</dbReference>
<dbReference type="HAMAP" id="MF_00580">
    <property type="entry name" value="CH10"/>
    <property type="match status" value="1"/>
</dbReference>
<dbReference type="InterPro" id="IPR020818">
    <property type="entry name" value="Chaperonin_GroES"/>
</dbReference>
<dbReference type="InterPro" id="IPR037124">
    <property type="entry name" value="Chaperonin_GroES_sf"/>
</dbReference>
<dbReference type="InterPro" id="IPR018369">
    <property type="entry name" value="Chaprnonin_Cpn10_CS"/>
</dbReference>
<dbReference type="InterPro" id="IPR011032">
    <property type="entry name" value="GroES-like_sf"/>
</dbReference>
<dbReference type="NCBIfam" id="NF001526">
    <property type="entry name" value="PRK00364.1-1"/>
    <property type="match status" value="1"/>
</dbReference>
<dbReference type="PANTHER" id="PTHR10772">
    <property type="entry name" value="10 KDA HEAT SHOCK PROTEIN"/>
    <property type="match status" value="1"/>
</dbReference>
<dbReference type="PANTHER" id="PTHR10772:SF58">
    <property type="entry name" value="CO-CHAPERONIN GROES"/>
    <property type="match status" value="1"/>
</dbReference>
<dbReference type="Pfam" id="PF00166">
    <property type="entry name" value="Cpn10"/>
    <property type="match status" value="1"/>
</dbReference>
<dbReference type="PRINTS" id="PR00297">
    <property type="entry name" value="CHAPERONIN10"/>
</dbReference>
<dbReference type="SMART" id="SM00883">
    <property type="entry name" value="Cpn10"/>
    <property type="match status" value="1"/>
</dbReference>
<dbReference type="SUPFAM" id="SSF50129">
    <property type="entry name" value="GroES-like"/>
    <property type="match status" value="1"/>
</dbReference>
<dbReference type="PROSITE" id="PS00681">
    <property type="entry name" value="CHAPERONINS_CPN10"/>
    <property type="match status" value="1"/>
</dbReference>
<gene>
    <name evidence="1" type="primary">groES2</name>
    <name evidence="1" type="synonym">groS2</name>
    <name type="ordered locus">VPA0286</name>
</gene>
<organism>
    <name type="scientific">Vibrio parahaemolyticus serotype O3:K6 (strain RIMD 2210633)</name>
    <dbReference type="NCBI Taxonomy" id="223926"/>
    <lineage>
        <taxon>Bacteria</taxon>
        <taxon>Pseudomonadati</taxon>
        <taxon>Pseudomonadota</taxon>
        <taxon>Gammaproteobacteria</taxon>
        <taxon>Vibrionales</taxon>
        <taxon>Vibrionaceae</taxon>
        <taxon>Vibrio</taxon>
    </lineage>
</organism>
<accession>Q87JG7</accession>
<protein>
    <recommendedName>
        <fullName evidence="1">Co-chaperonin GroES 2</fullName>
    </recommendedName>
    <alternativeName>
        <fullName evidence="1">10 kDa chaperonin 2</fullName>
    </alternativeName>
    <alternativeName>
        <fullName evidence="1">Chaperonin-10 2</fullName>
        <shortName evidence="1">Cpn10 2</shortName>
    </alternativeName>
</protein>
<evidence type="ECO:0000255" key="1">
    <source>
        <dbReference type="HAMAP-Rule" id="MF_00580"/>
    </source>
</evidence>
<evidence type="ECO:0000305" key="2"/>
<proteinExistence type="inferred from homology"/>